<gene>
    <name evidence="1" type="primary">nuoN</name>
    <name type="ordered locus">DehaBAV1_0817</name>
</gene>
<proteinExistence type="inferred from homology"/>
<reference key="1">
    <citation type="submission" date="2007-05" db="EMBL/GenBank/DDBJ databases">
        <title>Complete sequence of Dehalococcoides sp. BAV1.</title>
        <authorList>
            <consortium name="US DOE Joint Genome Institute"/>
            <person name="Copeland A."/>
            <person name="Lucas S."/>
            <person name="Lapidus A."/>
            <person name="Barry K."/>
            <person name="Detter J.C."/>
            <person name="Glavina del Rio T."/>
            <person name="Hammon N."/>
            <person name="Israni S."/>
            <person name="Pitluck S."/>
            <person name="Lowry S."/>
            <person name="Clum A."/>
            <person name="Schmutz J."/>
            <person name="Larimer F."/>
            <person name="Land M."/>
            <person name="Hauser L."/>
            <person name="Kyrpides N."/>
            <person name="Kim E."/>
            <person name="Ritalahti K.M."/>
            <person name="Loeffler F."/>
            <person name="Richardson P."/>
        </authorList>
    </citation>
    <scope>NUCLEOTIDE SEQUENCE [LARGE SCALE GENOMIC DNA]</scope>
    <source>
        <strain>ATCC BAA-2100 / JCM 16839 / KCTC 5957 / BAV1</strain>
    </source>
</reference>
<comment type="function">
    <text evidence="1">NDH-1 shuttles electrons from NADH, via FMN and iron-sulfur (Fe-S) centers, to quinones in the respiratory chain. The immediate electron acceptor for the enzyme in this species is believed to be ubiquinone. Couples the redox reaction to proton translocation (for every two electrons transferred, four hydrogen ions are translocated across the cytoplasmic membrane), and thus conserves the redox energy in a proton gradient.</text>
</comment>
<comment type="catalytic activity">
    <reaction evidence="1">
        <text>a quinone + NADH + 5 H(+)(in) = a quinol + NAD(+) + 4 H(+)(out)</text>
        <dbReference type="Rhea" id="RHEA:57888"/>
        <dbReference type="ChEBI" id="CHEBI:15378"/>
        <dbReference type="ChEBI" id="CHEBI:24646"/>
        <dbReference type="ChEBI" id="CHEBI:57540"/>
        <dbReference type="ChEBI" id="CHEBI:57945"/>
        <dbReference type="ChEBI" id="CHEBI:132124"/>
    </reaction>
</comment>
<comment type="subunit">
    <text evidence="1">NDH-1 is composed of 14 different subunits. Subunits NuoA, H, J, K, L, M, N constitute the membrane sector of the complex.</text>
</comment>
<comment type="subcellular location">
    <subcellularLocation>
        <location evidence="1">Cell membrane</location>
        <topology evidence="1">Multi-pass membrane protein</topology>
    </subcellularLocation>
</comment>
<comment type="similarity">
    <text evidence="1">Belongs to the complex I subunit 2 family.</text>
</comment>
<sequence>MDLFMPEIIILITALLVIITDLFLTKSKRHLAYLSLLGLGAAAVATVLNWDSPPELAFGGMWALDGYASFFRILFISLSGLVIMASVDYVNKFRRFQGEYYALVLLALLGMIMMASTTNLITMYLSLELAGLAFYVLVGFLKDQHSSESALKYLLLGGVASAMLVFGLVLIYGFSGETNLGSILNYIQTLPSGMDITAHTGFILGIILTITGLGFKVAAVPFQFWAPDVYQGSPTPITLYLSIASKAAGFALFLRLFYTVFTDPLALSQEWALIVAVLATAGMTLGNVLAIPQKNIKRMLGYSSIAHAGYILVALAAVGNSPELADGRISLLFYLVAFAVSDLVAFVSIIAISRSTGSDEIPSYEGLAKTNPVYASALTLALLSLTGFPPLAGFLAKYYIFSAAVQADLLWLMIVAAVNTVISAVFYFNVIRVMWLRQPREEVRVLASWPLKLALGISGLAVLIFGIIPETLLNLIEKATELIIH</sequence>
<dbReference type="EC" id="7.1.1.-" evidence="1"/>
<dbReference type="EMBL" id="CP000688">
    <property type="protein sequence ID" value="ABQ17400.1"/>
    <property type="molecule type" value="Genomic_DNA"/>
</dbReference>
<dbReference type="SMR" id="A5FQX9"/>
<dbReference type="KEGG" id="deb:DehaBAV1_0817"/>
<dbReference type="PATRIC" id="fig|216389.18.peg.866"/>
<dbReference type="HOGENOM" id="CLU_007100_1_2_0"/>
<dbReference type="GO" id="GO:0005886">
    <property type="term" value="C:plasma membrane"/>
    <property type="evidence" value="ECO:0007669"/>
    <property type="project" value="UniProtKB-SubCell"/>
</dbReference>
<dbReference type="GO" id="GO:0008137">
    <property type="term" value="F:NADH dehydrogenase (ubiquinone) activity"/>
    <property type="evidence" value="ECO:0007669"/>
    <property type="project" value="InterPro"/>
</dbReference>
<dbReference type="GO" id="GO:0050136">
    <property type="term" value="F:NADH:ubiquinone reductase (non-electrogenic) activity"/>
    <property type="evidence" value="ECO:0007669"/>
    <property type="project" value="UniProtKB-UniRule"/>
</dbReference>
<dbReference type="GO" id="GO:0048038">
    <property type="term" value="F:quinone binding"/>
    <property type="evidence" value="ECO:0007669"/>
    <property type="project" value="UniProtKB-KW"/>
</dbReference>
<dbReference type="GO" id="GO:0042773">
    <property type="term" value="P:ATP synthesis coupled electron transport"/>
    <property type="evidence" value="ECO:0007669"/>
    <property type="project" value="InterPro"/>
</dbReference>
<dbReference type="HAMAP" id="MF_00445">
    <property type="entry name" value="NDH1_NuoN_1"/>
    <property type="match status" value="1"/>
</dbReference>
<dbReference type="InterPro" id="IPR010096">
    <property type="entry name" value="NADH-Q_OxRdtase_suN/2"/>
</dbReference>
<dbReference type="InterPro" id="IPR001750">
    <property type="entry name" value="ND/Mrp_TM"/>
</dbReference>
<dbReference type="NCBIfam" id="TIGR01770">
    <property type="entry name" value="NDH_I_N"/>
    <property type="match status" value="1"/>
</dbReference>
<dbReference type="PANTHER" id="PTHR22773">
    <property type="entry name" value="NADH DEHYDROGENASE"/>
    <property type="match status" value="1"/>
</dbReference>
<dbReference type="Pfam" id="PF00361">
    <property type="entry name" value="Proton_antipo_M"/>
    <property type="match status" value="1"/>
</dbReference>
<name>NUON_DEHMB</name>
<accession>A5FQX9</accession>
<evidence type="ECO:0000255" key="1">
    <source>
        <dbReference type="HAMAP-Rule" id="MF_00445"/>
    </source>
</evidence>
<protein>
    <recommendedName>
        <fullName evidence="1">NADH-quinone oxidoreductase subunit N</fullName>
        <ecNumber evidence="1">7.1.1.-</ecNumber>
    </recommendedName>
    <alternativeName>
        <fullName evidence="1">NADH dehydrogenase I subunit N</fullName>
    </alternativeName>
    <alternativeName>
        <fullName evidence="1">NDH-1 subunit N</fullName>
    </alternativeName>
</protein>
<organism>
    <name type="scientific">Dehalococcoides mccartyi (strain ATCC BAA-2100 / JCM 16839 / KCTC 5957 / BAV1)</name>
    <dbReference type="NCBI Taxonomy" id="216389"/>
    <lineage>
        <taxon>Bacteria</taxon>
        <taxon>Bacillati</taxon>
        <taxon>Chloroflexota</taxon>
        <taxon>Dehalococcoidia</taxon>
        <taxon>Dehalococcoidales</taxon>
        <taxon>Dehalococcoidaceae</taxon>
        <taxon>Dehalococcoides</taxon>
    </lineage>
</organism>
<feature type="chain" id="PRO_0000391134" description="NADH-quinone oxidoreductase subunit N">
    <location>
        <begin position="1"/>
        <end position="485"/>
    </location>
</feature>
<feature type="transmembrane region" description="Helical" evidence="1">
    <location>
        <begin position="3"/>
        <end position="23"/>
    </location>
</feature>
<feature type="transmembrane region" description="Helical" evidence="1">
    <location>
        <begin position="30"/>
        <end position="50"/>
    </location>
</feature>
<feature type="transmembrane region" description="Helical" evidence="1">
    <location>
        <begin position="67"/>
        <end position="87"/>
    </location>
</feature>
<feature type="transmembrane region" description="Helical" evidence="1">
    <location>
        <begin position="96"/>
        <end position="116"/>
    </location>
</feature>
<feature type="transmembrane region" description="Helical" evidence="1">
    <location>
        <begin position="120"/>
        <end position="140"/>
    </location>
</feature>
<feature type="transmembrane region" description="Helical" evidence="1">
    <location>
        <begin position="154"/>
        <end position="174"/>
    </location>
</feature>
<feature type="transmembrane region" description="Helical" evidence="1">
    <location>
        <begin position="202"/>
        <end position="222"/>
    </location>
</feature>
<feature type="transmembrane region" description="Helical" evidence="1">
    <location>
        <begin position="247"/>
        <end position="267"/>
    </location>
</feature>
<feature type="transmembrane region" description="Helical" evidence="1">
    <location>
        <begin position="271"/>
        <end position="291"/>
    </location>
</feature>
<feature type="transmembrane region" description="Helical" evidence="1">
    <location>
        <begin position="299"/>
        <end position="319"/>
    </location>
</feature>
<feature type="transmembrane region" description="Helical" evidence="1">
    <location>
        <begin position="332"/>
        <end position="352"/>
    </location>
</feature>
<feature type="transmembrane region" description="Helical" evidence="1">
    <location>
        <begin position="375"/>
        <end position="395"/>
    </location>
</feature>
<feature type="transmembrane region" description="Helical" evidence="1">
    <location>
        <begin position="411"/>
        <end position="431"/>
    </location>
</feature>
<feature type="transmembrane region" description="Helical" evidence="1">
    <location>
        <begin position="453"/>
        <end position="473"/>
    </location>
</feature>
<keyword id="KW-1003">Cell membrane</keyword>
<keyword id="KW-0472">Membrane</keyword>
<keyword id="KW-0520">NAD</keyword>
<keyword id="KW-0874">Quinone</keyword>
<keyword id="KW-1278">Translocase</keyword>
<keyword id="KW-0812">Transmembrane</keyword>
<keyword id="KW-1133">Transmembrane helix</keyword>
<keyword id="KW-0813">Transport</keyword>
<keyword id="KW-0830">Ubiquinone</keyword>